<accession>B5Z4B3</accession>
<sequence>MTFSVDKVRADFPVLSREVNGLPLAYLDSAASAQKPSQVIDAEAEFYRHGYAAVHRGIHTLSAQATEKMENVRKRASLFINARSAEELVFVRGTTEGINLVANSWGNSNVRAGDNIIISQMEHHANIVPWQMLCARVGAELRVIPLNPDGTLQLETLPTLFDEKTRLLAITHVSNVLGTENPLAEMITLAHQHGAKVLVDGAQAVMHHPVDVQALDCDFYVFSGHKLYGPTGIGILYVKEALLQEMPPWEGGGSMIATVSLSEGTTWTKAPWRFEAGTPNTGGIIGLGAALEYVSAQGLNNIAEYEQNLMHYALSQLESVPDLTLYGPQNRLGVIAFNLGKHHAYDVGSFLDNYGIAVRTGHHCAMPLMAYYNVPAMCRASLAMYNTHEEVDRLVTGLQRIHRLLG</sequence>
<name>SUFS_ECO5E</name>
<evidence type="ECO:0000255" key="1">
    <source>
        <dbReference type="HAMAP-Rule" id="MF_01831"/>
    </source>
</evidence>
<keyword id="KW-0963">Cytoplasm</keyword>
<keyword id="KW-0456">Lyase</keyword>
<keyword id="KW-0663">Pyridoxal phosphate</keyword>
<keyword id="KW-0808">Transferase</keyword>
<proteinExistence type="inferred from homology"/>
<reference key="1">
    <citation type="journal article" date="2011" name="Proc. Natl. Acad. Sci. U.S.A.">
        <title>Genomic anatomy of Escherichia coli O157:H7 outbreaks.</title>
        <authorList>
            <person name="Eppinger M."/>
            <person name="Mammel M.K."/>
            <person name="Leclerc J.E."/>
            <person name="Ravel J."/>
            <person name="Cebula T.A."/>
        </authorList>
    </citation>
    <scope>NUCLEOTIDE SEQUENCE [LARGE SCALE GENOMIC DNA]</scope>
    <source>
        <strain>EC4115 / EHEC</strain>
    </source>
</reference>
<organism>
    <name type="scientific">Escherichia coli O157:H7 (strain EC4115 / EHEC)</name>
    <dbReference type="NCBI Taxonomy" id="444450"/>
    <lineage>
        <taxon>Bacteria</taxon>
        <taxon>Pseudomonadati</taxon>
        <taxon>Pseudomonadota</taxon>
        <taxon>Gammaproteobacteria</taxon>
        <taxon>Enterobacterales</taxon>
        <taxon>Enterobacteriaceae</taxon>
        <taxon>Escherichia</taxon>
    </lineage>
</organism>
<dbReference type="EC" id="2.8.1.7" evidence="1"/>
<dbReference type="EC" id="4.4.1.16" evidence="1"/>
<dbReference type="EMBL" id="CP001164">
    <property type="protein sequence ID" value="ACI37034.1"/>
    <property type="molecule type" value="Genomic_DNA"/>
</dbReference>
<dbReference type="RefSeq" id="WP_000144581.1">
    <property type="nucleotide sequence ID" value="NC_011353.1"/>
</dbReference>
<dbReference type="SMR" id="B5Z4B3"/>
<dbReference type="KEGG" id="ecf:ECH74115_2394"/>
<dbReference type="HOGENOM" id="CLU_003433_2_5_6"/>
<dbReference type="UniPathway" id="UPA00266"/>
<dbReference type="GO" id="GO:0005737">
    <property type="term" value="C:cytoplasm"/>
    <property type="evidence" value="ECO:0007669"/>
    <property type="project" value="UniProtKB-SubCell"/>
</dbReference>
<dbReference type="GO" id="GO:0031071">
    <property type="term" value="F:cysteine desulfurase activity"/>
    <property type="evidence" value="ECO:0007669"/>
    <property type="project" value="UniProtKB-UniRule"/>
</dbReference>
<dbReference type="GO" id="GO:0030170">
    <property type="term" value="F:pyridoxal phosphate binding"/>
    <property type="evidence" value="ECO:0007669"/>
    <property type="project" value="InterPro"/>
</dbReference>
<dbReference type="GO" id="GO:0009000">
    <property type="term" value="F:selenocysteine lyase activity"/>
    <property type="evidence" value="ECO:0007669"/>
    <property type="project" value="UniProtKB-UniRule"/>
</dbReference>
<dbReference type="GO" id="GO:0006534">
    <property type="term" value="P:cysteine metabolic process"/>
    <property type="evidence" value="ECO:0007669"/>
    <property type="project" value="InterPro"/>
</dbReference>
<dbReference type="CDD" id="cd06453">
    <property type="entry name" value="SufS_like"/>
    <property type="match status" value="1"/>
</dbReference>
<dbReference type="FunFam" id="3.40.640.10:FF:000042">
    <property type="entry name" value="Cysteine desulfurase"/>
    <property type="match status" value="1"/>
</dbReference>
<dbReference type="Gene3D" id="3.90.1150.10">
    <property type="entry name" value="Aspartate Aminotransferase, domain 1"/>
    <property type="match status" value="1"/>
</dbReference>
<dbReference type="Gene3D" id="3.40.640.10">
    <property type="entry name" value="Type I PLP-dependent aspartate aminotransferase-like (Major domain)"/>
    <property type="match status" value="1"/>
</dbReference>
<dbReference type="HAMAP" id="MF_01831">
    <property type="entry name" value="SufS_aminotrans_5"/>
    <property type="match status" value="1"/>
</dbReference>
<dbReference type="InterPro" id="IPR000192">
    <property type="entry name" value="Aminotrans_V_dom"/>
</dbReference>
<dbReference type="InterPro" id="IPR020578">
    <property type="entry name" value="Aminotrans_V_PyrdxlP_BS"/>
</dbReference>
<dbReference type="InterPro" id="IPR010970">
    <property type="entry name" value="Cys_dSase_SufS"/>
</dbReference>
<dbReference type="InterPro" id="IPR015424">
    <property type="entry name" value="PyrdxlP-dep_Trfase"/>
</dbReference>
<dbReference type="InterPro" id="IPR015421">
    <property type="entry name" value="PyrdxlP-dep_Trfase_major"/>
</dbReference>
<dbReference type="InterPro" id="IPR015422">
    <property type="entry name" value="PyrdxlP-dep_Trfase_small"/>
</dbReference>
<dbReference type="NCBIfam" id="NF006791">
    <property type="entry name" value="PRK09295.1"/>
    <property type="match status" value="1"/>
</dbReference>
<dbReference type="NCBIfam" id="TIGR01979">
    <property type="entry name" value="sufS"/>
    <property type="match status" value="1"/>
</dbReference>
<dbReference type="PANTHER" id="PTHR43586">
    <property type="entry name" value="CYSTEINE DESULFURASE"/>
    <property type="match status" value="1"/>
</dbReference>
<dbReference type="PANTHER" id="PTHR43586:SF25">
    <property type="entry name" value="CYSTEINE DESULFURASE"/>
    <property type="match status" value="1"/>
</dbReference>
<dbReference type="Pfam" id="PF00266">
    <property type="entry name" value="Aminotran_5"/>
    <property type="match status" value="1"/>
</dbReference>
<dbReference type="SUPFAM" id="SSF53383">
    <property type="entry name" value="PLP-dependent transferases"/>
    <property type="match status" value="1"/>
</dbReference>
<dbReference type="PROSITE" id="PS00595">
    <property type="entry name" value="AA_TRANSFER_CLASS_5"/>
    <property type="match status" value="1"/>
</dbReference>
<gene>
    <name evidence="1" type="primary">sufS</name>
    <name type="ordered locus">ECH74115_2394</name>
</gene>
<comment type="function">
    <text evidence="1">Cysteine desulfurases mobilize the sulfur from L-cysteine to yield L-alanine, an essential step in sulfur metabolism for biosynthesis of a variety of sulfur-containing biomolecules. Component of the suf operon, which is activated and required under specific conditions such as oxidative stress and iron limitation. Acts as a potent selenocysteine lyase in vitro, that mobilizes selenium from L-selenocysteine. Selenocysteine lyase activity is however unsure in vivo.</text>
</comment>
<comment type="catalytic activity">
    <reaction evidence="1">
        <text>(sulfur carrier)-H + L-cysteine = (sulfur carrier)-SH + L-alanine</text>
        <dbReference type="Rhea" id="RHEA:43892"/>
        <dbReference type="Rhea" id="RHEA-COMP:14737"/>
        <dbReference type="Rhea" id="RHEA-COMP:14739"/>
        <dbReference type="ChEBI" id="CHEBI:29917"/>
        <dbReference type="ChEBI" id="CHEBI:35235"/>
        <dbReference type="ChEBI" id="CHEBI:57972"/>
        <dbReference type="ChEBI" id="CHEBI:64428"/>
        <dbReference type="EC" id="2.8.1.7"/>
    </reaction>
</comment>
<comment type="catalytic activity">
    <reaction evidence="1">
        <text>L-selenocysteine + AH2 = hydrogenselenide + L-alanine + A + H(+)</text>
        <dbReference type="Rhea" id="RHEA:11632"/>
        <dbReference type="ChEBI" id="CHEBI:13193"/>
        <dbReference type="ChEBI" id="CHEBI:15378"/>
        <dbReference type="ChEBI" id="CHEBI:17499"/>
        <dbReference type="ChEBI" id="CHEBI:29317"/>
        <dbReference type="ChEBI" id="CHEBI:57843"/>
        <dbReference type="ChEBI" id="CHEBI:57972"/>
        <dbReference type="EC" id="4.4.1.16"/>
    </reaction>
</comment>
<comment type="cofactor">
    <cofactor evidence="1">
        <name>pyridoxal 5'-phosphate</name>
        <dbReference type="ChEBI" id="CHEBI:597326"/>
    </cofactor>
</comment>
<comment type="pathway">
    <text evidence="1">Cofactor biosynthesis; iron-sulfur cluster biosynthesis.</text>
</comment>
<comment type="subunit">
    <text evidence="1">Homodimer. Interacts with SufE and the SufBCD complex composed of SufB, SufC and SufD. The interaction with SufE is required to mediate the direct transfer of the sulfur atom from the S-sulfanylcysteine.</text>
</comment>
<comment type="subcellular location">
    <subcellularLocation>
        <location evidence="1">Cytoplasm</location>
    </subcellularLocation>
</comment>
<comment type="similarity">
    <text evidence="1">Belongs to the class-V pyridoxal-phosphate-dependent aminotransferase family. Csd subfamily.</text>
</comment>
<protein>
    <recommendedName>
        <fullName evidence="1">Cysteine desulfurase</fullName>
        <ecNumber evidence="1">2.8.1.7</ecNumber>
    </recommendedName>
    <alternativeName>
        <fullName evidence="1">Selenocysteine beta-lyase</fullName>
        <shortName evidence="1">SCL</shortName>
    </alternativeName>
    <alternativeName>
        <fullName evidence="1">Selenocysteine lyase</fullName>
        <ecNumber evidence="1">4.4.1.16</ecNumber>
    </alternativeName>
    <alternativeName>
        <fullName evidence="1">Selenocysteine reductase</fullName>
    </alternativeName>
</protein>
<feature type="chain" id="PRO_1000188294" description="Cysteine desulfurase">
    <location>
        <begin position="1"/>
        <end position="406"/>
    </location>
</feature>
<feature type="active site" description="Cysteine persulfide intermediate" evidence="1">
    <location>
        <position position="364"/>
    </location>
</feature>
<feature type="modified residue" description="N6-(pyridoxal phosphate)lysine" evidence="1">
    <location>
        <position position="226"/>
    </location>
</feature>